<protein>
    <recommendedName>
        <fullName>Basic phospholipase A2 Tgc-K49</fullName>
        <shortName>svPLA2</shortName>
        <ecNumber>3.1.1.4</ecNumber>
    </recommendedName>
    <alternativeName>
        <fullName>Phosphatidylcholine 2-acylhydrolase</fullName>
    </alternativeName>
</protein>
<organism>
    <name type="scientific">Trimeresurus gracilis</name>
    <name type="common">Kikuchi habu</name>
    <dbReference type="NCBI Taxonomy" id="109781"/>
    <lineage>
        <taxon>Eukaryota</taxon>
        <taxon>Metazoa</taxon>
        <taxon>Chordata</taxon>
        <taxon>Craniata</taxon>
        <taxon>Vertebrata</taxon>
        <taxon>Euteleostomi</taxon>
        <taxon>Lepidosauria</taxon>
        <taxon>Squamata</taxon>
        <taxon>Bifurcata</taxon>
        <taxon>Unidentata</taxon>
        <taxon>Episquamata</taxon>
        <taxon>Toxicofera</taxon>
        <taxon>Serpentes</taxon>
        <taxon>Colubroidea</taxon>
        <taxon>Viperidae</taxon>
        <taxon>Crotalinae</taxon>
        <taxon>Trimeresurus</taxon>
    </lineage>
</organism>
<evidence type="ECO:0000250" key="1"/>
<evidence type="ECO:0000250" key="2">
    <source>
        <dbReference type="UniProtKB" id="Q90249"/>
    </source>
</evidence>
<evidence type="ECO:0000255" key="3">
    <source>
        <dbReference type="PROSITE-ProRule" id="PRU10035"/>
    </source>
</evidence>
<evidence type="ECO:0000255" key="4">
    <source>
        <dbReference type="PROSITE-ProRule" id="PRU10036"/>
    </source>
</evidence>
<evidence type="ECO:0000305" key="5"/>
<evidence type="ECO:0000305" key="6">
    <source>
    </source>
</evidence>
<sequence>MRTLWIVAVLLVGEGSLIQLWEMIFQEMGKGAAKKYGLYGCNCGMGHRGRPVDATDRCCSVHKCCYKKLTDCDPKTDRYSYSWENGAIVCGGDDPCRKEVCECDKATTICFRDNLDTYDKKYKIYLKFLCKKPEPC</sequence>
<comment type="function">
    <text evidence="1">PLA2 catalyzes the calcium-dependent hydrolysis of the 2-acyl groups in 3-sn-phosphoglycerides.</text>
</comment>
<comment type="catalytic activity">
    <reaction evidence="3 4">
        <text>a 1,2-diacyl-sn-glycero-3-phosphocholine + H2O = a 1-acyl-sn-glycero-3-phosphocholine + a fatty acid + H(+)</text>
        <dbReference type="Rhea" id="RHEA:15801"/>
        <dbReference type="ChEBI" id="CHEBI:15377"/>
        <dbReference type="ChEBI" id="CHEBI:15378"/>
        <dbReference type="ChEBI" id="CHEBI:28868"/>
        <dbReference type="ChEBI" id="CHEBI:57643"/>
        <dbReference type="ChEBI" id="CHEBI:58168"/>
        <dbReference type="EC" id="3.1.1.4"/>
    </reaction>
</comment>
<comment type="subcellular location">
    <subcellularLocation>
        <location evidence="1">Secreted</location>
    </subcellularLocation>
</comment>
<comment type="tissue specificity">
    <text>Expressed by the venom gland.</text>
</comment>
<comment type="similarity">
    <text evidence="5">Belongs to the phospholipase A2 family. Group II subfamily. K49 sub-subfamily.</text>
</comment>
<comment type="caution">
    <text evidence="6">This protein is not found in the crude venom.</text>
</comment>
<dbReference type="EC" id="3.1.1.4"/>
<dbReference type="EMBL" id="AY764142">
    <property type="protein sequence ID" value="AAW92122.1"/>
    <property type="molecule type" value="mRNA"/>
</dbReference>
<dbReference type="SMR" id="A8E2V9"/>
<dbReference type="GO" id="GO:0005576">
    <property type="term" value="C:extracellular region"/>
    <property type="evidence" value="ECO:0007669"/>
    <property type="project" value="UniProtKB-SubCell"/>
</dbReference>
<dbReference type="GO" id="GO:0005509">
    <property type="term" value="F:calcium ion binding"/>
    <property type="evidence" value="ECO:0007669"/>
    <property type="project" value="InterPro"/>
</dbReference>
<dbReference type="GO" id="GO:0047498">
    <property type="term" value="F:calcium-dependent phospholipase A2 activity"/>
    <property type="evidence" value="ECO:0007669"/>
    <property type="project" value="TreeGrafter"/>
</dbReference>
<dbReference type="GO" id="GO:0005543">
    <property type="term" value="F:phospholipid binding"/>
    <property type="evidence" value="ECO:0007669"/>
    <property type="project" value="TreeGrafter"/>
</dbReference>
<dbReference type="GO" id="GO:0050482">
    <property type="term" value="P:arachidonate secretion"/>
    <property type="evidence" value="ECO:0007669"/>
    <property type="project" value="InterPro"/>
</dbReference>
<dbReference type="GO" id="GO:0016042">
    <property type="term" value="P:lipid catabolic process"/>
    <property type="evidence" value="ECO:0007669"/>
    <property type="project" value="UniProtKB-KW"/>
</dbReference>
<dbReference type="GO" id="GO:0006644">
    <property type="term" value="P:phospholipid metabolic process"/>
    <property type="evidence" value="ECO:0007669"/>
    <property type="project" value="InterPro"/>
</dbReference>
<dbReference type="CDD" id="cd00125">
    <property type="entry name" value="PLA2c"/>
    <property type="match status" value="1"/>
</dbReference>
<dbReference type="FunFam" id="1.20.90.10:FF:000001">
    <property type="entry name" value="Basic phospholipase A2 homolog"/>
    <property type="match status" value="1"/>
</dbReference>
<dbReference type="Gene3D" id="1.20.90.10">
    <property type="entry name" value="Phospholipase A2 domain"/>
    <property type="match status" value="1"/>
</dbReference>
<dbReference type="InterPro" id="IPR001211">
    <property type="entry name" value="PLipase_A2"/>
</dbReference>
<dbReference type="InterPro" id="IPR033112">
    <property type="entry name" value="PLipase_A2_Asp_AS"/>
</dbReference>
<dbReference type="InterPro" id="IPR016090">
    <property type="entry name" value="PLipase_A2_dom"/>
</dbReference>
<dbReference type="InterPro" id="IPR036444">
    <property type="entry name" value="PLipase_A2_dom_sf"/>
</dbReference>
<dbReference type="InterPro" id="IPR033113">
    <property type="entry name" value="PLipase_A2_His_AS"/>
</dbReference>
<dbReference type="PANTHER" id="PTHR11716:SF101">
    <property type="entry name" value="BASIC PHOSPHOLIPASE A2 PA-11-LIKE"/>
    <property type="match status" value="1"/>
</dbReference>
<dbReference type="PANTHER" id="PTHR11716">
    <property type="entry name" value="PHOSPHOLIPASE A2 FAMILY MEMBER"/>
    <property type="match status" value="1"/>
</dbReference>
<dbReference type="Pfam" id="PF00068">
    <property type="entry name" value="Phospholip_A2_1"/>
    <property type="match status" value="1"/>
</dbReference>
<dbReference type="PRINTS" id="PR00389">
    <property type="entry name" value="PHPHLIPASEA2"/>
</dbReference>
<dbReference type="SMART" id="SM00085">
    <property type="entry name" value="PA2c"/>
    <property type="match status" value="1"/>
</dbReference>
<dbReference type="SUPFAM" id="SSF48619">
    <property type="entry name" value="Phospholipase A2, PLA2"/>
    <property type="match status" value="1"/>
</dbReference>
<dbReference type="PROSITE" id="PS00119">
    <property type="entry name" value="PA2_ASP"/>
    <property type="match status" value="1"/>
</dbReference>
<dbReference type="PROSITE" id="PS00118">
    <property type="entry name" value="PA2_HIS"/>
    <property type="match status" value="1"/>
</dbReference>
<feature type="signal peptide" evidence="1">
    <location>
        <begin position="1"/>
        <end position="15"/>
    </location>
</feature>
<feature type="chain" id="PRO_0000419054" description="Basic phospholipase A2 Tgc-K49">
    <location>
        <begin position="16"/>
        <end position="136"/>
    </location>
</feature>
<feature type="active site" evidence="1">
    <location>
        <position position="62"/>
    </location>
</feature>
<feature type="active site" evidence="1">
    <location>
        <position position="104"/>
    </location>
</feature>
<feature type="disulfide bond" evidence="2">
    <location>
        <begin position="41"/>
        <end position="130"/>
    </location>
</feature>
<feature type="disulfide bond" evidence="2">
    <location>
        <begin position="43"/>
        <end position="59"/>
    </location>
</feature>
<feature type="disulfide bond" evidence="2">
    <location>
        <begin position="58"/>
        <end position="110"/>
    </location>
</feature>
<feature type="disulfide bond" evidence="2">
    <location>
        <begin position="64"/>
        <end position="136"/>
    </location>
</feature>
<feature type="disulfide bond" evidence="2">
    <location>
        <begin position="65"/>
        <end position="103"/>
    </location>
</feature>
<feature type="disulfide bond" evidence="2">
    <location>
        <begin position="72"/>
        <end position="96"/>
    </location>
</feature>
<feature type="disulfide bond" evidence="2">
    <location>
        <begin position="90"/>
        <end position="101"/>
    </location>
</feature>
<name>PA2B_TRIGS</name>
<reference key="1">
    <citation type="journal article" date="2012" name="Toxicon">
        <title>Cloning and characterization of Trimeresurus gracilis venom phospholipases A(2): comparison with Ovophis okinavensis venom and the systematic implications.</title>
        <authorList>
            <person name="Tsai I.-H."/>
            <person name="Tsai T.-S."/>
            <person name="Wang Y.-M."/>
            <person name="Tu M.-C."/>
            <person name="Chang H.-C."/>
        </authorList>
    </citation>
    <scope>NUCLEOTIDE SEQUENCE [MRNA]</scope>
    <source>
        <tissue>Venom gland</tissue>
    </source>
</reference>
<keyword id="KW-1015">Disulfide bond</keyword>
<keyword id="KW-0378">Hydrolase</keyword>
<keyword id="KW-0442">Lipid degradation</keyword>
<keyword id="KW-0443">Lipid metabolism</keyword>
<keyword id="KW-0964">Secreted</keyword>
<keyword id="KW-0732">Signal</keyword>
<proteinExistence type="evidence at transcript level"/>
<accession>A8E2V9</accession>